<dbReference type="EC" id="2.1.1.-" evidence="3"/>
<dbReference type="EMBL" id="LC361337">
    <property type="protein sequence ID" value="BBC43188.1"/>
    <property type="molecule type" value="Genomic_DNA"/>
</dbReference>
<dbReference type="SMR" id="A0A2Z5XAK6"/>
<dbReference type="GO" id="GO:0008171">
    <property type="term" value="F:O-methyltransferase activity"/>
    <property type="evidence" value="ECO:0007669"/>
    <property type="project" value="InterPro"/>
</dbReference>
<dbReference type="GO" id="GO:0032259">
    <property type="term" value="P:methylation"/>
    <property type="evidence" value="ECO:0007669"/>
    <property type="project" value="UniProtKB-KW"/>
</dbReference>
<dbReference type="GO" id="GO:0044550">
    <property type="term" value="P:secondary metabolite biosynthetic process"/>
    <property type="evidence" value="ECO:0007669"/>
    <property type="project" value="UniProtKB-ARBA"/>
</dbReference>
<dbReference type="Gene3D" id="3.40.50.150">
    <property type="entry name" value="Vaccinia Virus protein VP39"/>
    <property type="match status" value="1"/>
</dbReference>
<dbReference type="Gene3D" id="1.10.10.10">
    <property type="entry name" value="Winged helix-like DNA-binding domain superfamily/Winged helix DNA-binding domain"/>
    <property type="match status" value="1"/>
</dbReference>
<dbReference type="InterPro" id="IPR016461">
    <property type="entry name" value="COMT-like"/>
</dbReference>
<dbReference type="InterPro" id="IPR001077">
    <property type="entry name" value="O_MeTrfase_dom"/>
</dbReference>
<dbReference type="InterPro" id="IPR029063">
    <property type="entry name" value="SAM-dependent_MTases_sf"/>
</dbReference>
<dbReference type="InterPro" id="IPR036388">
    <property type="entry name" value="WH-like_DNA-bd_sf"/>
</dbReference>
<dbReference type="InterPro" id="IPR036390">
    <property type="entry name" value="WH_DNA-bd_sf"/>
</dbReference>
<dbReference type="PANTHER" id="PTHR43712:SF16">
    <property type="entry name" value="O-METHYLTRANSFERASE ELCB"/>
    <property type="match status" value="1"/>
</dbReference>
<dbReference type="PANTHER" id="PTHR43712">
    <property type="entry name" value="PUTATIVE (AFU_ORTHOLOGUE AFUA_4G14580)-RELATED"/>
    <property type="match status" value="1"/>
</dbReference>
<dbReference type="Pfam" id="PF00891">
    <property type="entry name" value="Methyltransf_2"/>
    <property type="match status" value="1"/>
</dbReference>
<dbReference type="PIRSF" id="PIRSF005739">
    <property type="entry name" value="O-mtase"/>
    <property type="match status" value="1"/>
</dbReference>
<dbReference type="SUPFAM" id="SSF53335">
    <property type="entry name" value="S-adenosyl-L-methionine-dependent methyltransferases"/>
    <property type="match status" value="1"/>
</dbReference>
<dbReference type="SUPFAM" id="SSF46785">
    <property type="entry name" value="Winged helix' DNA-binding domain"/>
    <property type="match status" value="1"/>
</dbReference>
<dbReference type="PROSITE" id="PS51683">
    <property type="entry name" value="SAM_OMT_II"/>
    <property type="match status" value="1"/>
</dbReference>
<name>PHM5_PYRSX</name>
<protein>
    <recommendedName>
        <fullName evidence="5">Methyltransferase phm5</fullName>
        <ecNumber evidence="3">2.1.1.-</ecNumber>
    </recommendedName>
    <alternativeName>
        <fullName evidence="5">Phomasetin biosynthesis cluster protein 5</fullName>
    </alternativeName>
</protein>
<keyword id="KW-0489">Methyltransferase</keyword>
<keyword id="KW-0949">S-adenosyl-L-methionine</keyword>
<keyword id="KW-0808">Transferase</keyword>
<evidence type="ECO:0000250" key="1">
    <source>
        <dbReference type="UniProtKB" id="O04385"/>
    </source>
</evidence>
<evidence type="ECO:0000255" key="2">
    <source>
        <dbReference type="PROSITE-ProRule" id="PRU01020"/>
    </source>
</evidence>
<evidence type="ECO:0000269" key="3">
    <source>
    </source>
</evidence>
<evidence type="ECO:0000269" key="4">
    <source>
    </source>
</evidence>
<evidence type="ECO:0000303" key="5">
    <source>
    </source>
</evidence>
<evidence type="ECO:0000305" key="6"/>
<organism>
    <name type="scientific">Pyrenochaetopsis sp</name>
    <dbReference type="NCBI Taxonomy" id="1756125"/>
    <lineage>
        <taxon>Eukaryota</taxon>
        <taxon>Fungi</taxon>
        <taxon>Dikarya</taxon>
        <taxon>Ascomycota</taxon>
        <taxon>Pezizomycotina</taxon>
        <taxon>Dothideomycetes</taxon>
        <taxon>Pleosporomycetidae</taxon>
        <taxon>Pleosporales</taxon>
        <taxon>Pleosporineae</taxon>
        <taxon>Pyrenochaetopsidaceae</taxon>
        <taxon>Pyrenochaetopsis</taxon>
    </lineage>
</organism>
<comment type="function">
    <text evidence="3 4">Methyltransferase; part of the gene cluster that mediates the biosynthesis of the trans-fused decalin-containing tetramic acid phomasetin, the stereochemical opposite of the HIV-1 integrase inhibitor equisetin (PubMed:29972614). The PKS module of phm1 together with the enoylreductase phm4 catalyze the formation of the polyketide unit which is then conjugated to L-serine by the condensation domain of the phm1 NRPS module (PubMed:29972614). Activity of the Dieckmann cyclase domain (RED) of phm1 results in release of the Dieckmann product intermediate (PubMed:29972614). The Diels-Alderase phm7 then uses the Dieckmann product of phm1 as substrate and catalyzes the Diels-Alder cycloaddition to form the decalin ring of N-desmethylphomasetin (PubMed:29972614, PubMed:34121297). N-desmethylphomasetin is further methylated to phomasetin by the methyltransferase phm5 (PubMed:29972614).</text>
</comment>
<comment type="pathway">
    <text evidence="3">Secondary metabolite biosynthesis.</text>
</comment>
<comment type="disruption phenotype">
    <text evidence="3">Impairs the production of phomasetin but accumulates N-desmethylphomasetin.</text>
</comment>
<comment type="similarity">
    <text evidence="6">Belongs to the class I-like SAM-binding methyltransferase superfamily. Cation-independent O-methyltransferase family.</text>
</comment>
<accession>A0A2Z5XAK6</accession>
<reference key="1">
    <citation type="journal article" date="2018" name="Angew. Chem. Int. Ed.">
        <title>Control of the stereochemical course of [4+2] cycloaddition during trans-decalin formation by Fsa2-family enzymes.</title>
        <authorList>
            <person name="Kato N."/>
            <person name="Nogawa T."/>
            <person name="Takita R."/>
            <person name="Kinugasa K."/>
            <person name="Kanai M."/>
            <person name="Uchiyama M."/>
            <person name="Osada H."/>
            <person name="Takahashi S."/>
        </authorList>
    </citation>
    <scope>NUCLEOTIDE SEQUENCE [GENOMIC DNA]</scope>
    <scope>FUNCTION</scope>
    <scope>CATALYTIC ACTIVITY</scope>
    <scope>DISRUPTION PHENOTYPE</scope>
    <scope>PATHWAY</scope>
    <source>
        <strain>RK10-F058</strain>
    </source>
</reference>
<reference key="2">
    <citation type="journal article" date="2021" name="Angew. Chem. Int. Ed.">
        <title>Molecular basis for two stereoselective Diels-Alderases that produce decalin skeletons*.</title>
        <authorList>
            <person name="Fujiyama K."/>
            <person name="Kato N."/>
            <person name="Re S."/>
            <person name="Kinugasa K."/>
            <person name="Watanabe K."/>
            <person name="Takita R."/>
            <person name="Nogawa T."/>
            <person name="Hino T."/>
            <person name="Osada H."/>
            <person name="Sugita Y."/>
            <person name="Takahashi S."/>
            <person name="Nagano S."/>
        </authorList>
    </citation>
    <scope>FUNCTION</scope>
</reference>
<gene>
    <name evidence="5" type="primary">phm5</name>
</gene>
<sequence length="366" mass="40640">MAVKSSTVDVRAALQSAGAHYMNLIEFGILKVFIDHQIFDHIPAEGSISVTDLATRTKAEVSLLQRFSDYLVASEVLASPAPHELAHTTRSLSYRSEEIAAGFVSHVYHFFLRPMATWTAYFEENGLREPKDAKTIPLGLATGHPEEDLYGVLDKEPRLAYMFNVAQARSAAIFPMKGLYDFAWLREALEDHIGAESPAIVDIGGSHGLALKELLAENPFIPSKRCAVLDFPQTVEQAQQNLDEDLRDIHFIGGSMLEPLPVALHAAGIYQFRRVLSDFVDKDIILALEQVRRVCAPYSRVLIIEELVKASRDKFAIAQDISVLNFGGKRRSEADWHQLASQAGLQVRHVFEQTETAFAVVELGLA</sequence>
<feature type="chain" id="PRO_0000453344" description="Methyltransferase phm5">
    <location>
        <begin position="1"/>
        <end position="366"/>
    </location>
</feature>
<feature type="binding site" evidence="1">
    <location>
        <begin position="204"/>
        <end position="205"/>
    </location>
    <ligand>
        <name>S-adenosyl-L-methionine</name>
        <dbReference type="ChEBI" id="CHEBI:59789"/>
    </ligand>
</feature>
<feature type="binding site" evidence="2">
    <location>
        <position position="230"/>
    </location>
    <ligand>
        <name>S-adenosyl-L-methionine</name>
        <dbReference type="ChEBI" id="CHEBI:59789"/>
    </ligand>
</feature>
<feature type="binding site" evidence="1">
    <location>
        <begin position="255"/>
        <end position="256"/>
    </location>
    <ligand>
        <name>S-adenosyl-L-methionine</name>
        <dbReference type="ChEBI" id="CHEBI:59789"/>
    </ligand>
</feature>
<feature type="binding site" evidence="1">
    <location>
        <position position="273"/>
    </location>
    <ligand>
        <name>S-adenosyl-L-methionine</name>
        <dbReference type="ChEBI" id="CHEBI:59789"/>
    </ligand>
</feature>
<feature type="binding site" evidence="2">
    <location>
        <position position="274"/>
    </location>
    <ligand>
        <name>S-adenosyl-L-methionine</name>
        <dbReference type="ChEBI" id="CHEBI:59789"/>
    </ligand>
</feature>
<proteinExistence type="evidence at protein level"/>